<name>Y6531_BACAN</name>
<organism>
    <name type="scientific">Bacillus anthracis</name>
    <dbReference type="NCBI Taxonomy" id="1392"/>
    <lineage>
        <taxon>Bacteria</taxon>
        <taxon>Bacillati</taxon>
        <taxon>Bacillota</taxon>
        <taxon>Bacilli</taxon>
        <taxon>Bacillales</taxon>
        <taxon>Bacillaceae</taxon>
        <taxon>Bacillus</taxon>
        <taxon>Bacillus cereus group</taxon>
    </lineage>
</organism>
<protein>
    <recommendedName>
        <fullName>Uncharacterized protein pXO2-32/BXB0031/GBAA_pXO2_0031</fullName>
    </recommendedName>
</protein>
<gene>
    <name type="ordered locus">pXO2-32</name>
    <name type="ordered locus">BXB0031</name>
    <name type="ordered locus">GBAA_pXO2_0031</name>
</gene>
<sequence length="162" mass="18199">MCKRFKFLLAVSALFISITVVLAGCGGSSVPYKKDDTYKDSKDNFITITAENEWRVKGSQNSEANYKVESTEYKGDSHSVVAISVKEKINGSDPLLVVNDYHYYILSPRENGFSLTPIGTSHPNSAQWKEFQEGFKGANDKEEFLKKEVANVNKQNIFKKTN</sequence>
<proteinExistence type="inferred from homology"/>
<accession>Q9RN00</accession>
<accession>Q8KYF6</accession>
<dbReference type="EMBL" id="AF188935">
    <property type="protein sequence ID" value="AAF13637.1"/>
    <property type="status" value="ALT_INIT"/>
    <property type="molecule type" value="Genomic_DNA"/>
</dbReference>
<dbReference type="EMBL" id="AE011191">
    <property type="protein sequence ID" value="AAM26191.1"/>
    <property type="molecule type" value="Genomic_DNA"/>
</dbReference>
<dbReference type="EMBL" id="AE017335">
    <property type="protein sequence ID" value="AAT28961.2"/>
    <property type="molecule type" value="Genomic_DNA"/>
</dbReference>
<dbReference type="RefSeq" id="NP_053187.1">
    <property type="nucleotide sequence ID" value="NC_002146.1"/>
</dbReference>
<dbReference type="RefSeq" id="WP_000335298.1">
    <property type="nucleotide sequence ID" value="NZ_VTZL01000009.1"/>
</dbReference>
<dbReference type="SMR" id="Q9RN00"/>
<dbReference type="GeneID" id="45025342"/>
<dbReference type="KEGG" id="banh:HYU01_29160"/>
<dbReference type="KEGG" id="bar:GBAA_pXO2_0031"/>
<dbReference type="HOGENOM" id="CLU_1657275_0_0_9"/>
<dbReference type="OMA" id="IMIFTGC"/>
<dbReference type="Proteomes" id="UP000000594">
    <property type="component" value="Plasmid pXO2"/>
</dbReference>
<dbReference type="GO" id="GO:0005886">
    <property type="term" value="C:plasma membrane"/>
    <property type="evidence" value="ECO:0007669"/>
    <property type="project" value="UniProtKB-SubCell"/>
</dbReference>
<dbReference type="InterPro" id="IPR020257">
    <property type="entry name" value="DUF5512"/>
</dbReference>
<dbReference type="Pfam" id="PF17631">
    <property type="entry name" value="DUF5512"/>
    <property type="match status" value="1"/>
</dbReference>
<dbReference type="PROSITE" id="PS51257">
    <property type="entry name" value="PROKAR_LIPOPROTEIN"/>
    <property type="match status" value="1"/>
</dbReference>
<feature type="signal peptide" evidence="1">
    <location>
        <begin position="1"/>
        <end position="24"/>
    </location>
</feature>
<feature type="chain" id="PRO_0000013688" description="Uncharacterized protein pXO2-32/BXB0031/GBAA_pXO2_0031">
    <location>
        <begin position="25"/>
        <end position="162"/>
    </location>
</feature>
<feature type="lipid moiety-binding region" description="N-palmitoyl cysteine" evidence="1">
    <location>
        <position position="25"/>
    </location>
</feature>
<feature type="lipid moiety-binding region" description="S-diacylglycerol cysteine" evidence="1">
    <location>
        <position position="25"/>
    </location>
</feature>
<keyword id="KW-1003">Cell membrane</keyword>
<keyword id="KW-0449">Lipoprotein</keyword>
<keyword id="KW-0472">Membrane</keyword>
<keyword id="KW-0564">Palmitate</keyword>
<keyword id="KW-0614">Plasmid</keyword>
<keyword id="KW-1185">Reference proteome</keyword>
<keyword id="KW-0732">Signal</keyword>
<evidence type="ECO:0000255" key="1">
    <source>
        <dbReference type="PROSITE-ProRule" id="PRU00303"/>
    </source>
</evidence>
<evidence type="ECO:0000305" key="2"/>
<reference key="1">
    <citation type="journal article" date="1999" name="J. Appl. Microbiol.">
        <title>Sequence, assembly and analysis of pXO1 and pXO2.</title>
        <authorList>
            <person name="Okinaka R.T."/>
            <person name="Cloud K."/>
            <person name="Hampton O."/>
            <person name="Hoffmaster A."/>
            <person name="Hill K.K."/>
            <person name="Keim P."/>
            <person name="Koehler T."/>
            <person name="Lamke G."/>
            <person name="Kumano S."/>
            <person name="Manter D."/>
            <person name="Martinez Y."/>
            <person name="Ricke D."/>
            <person name="Svensson R."/>
            <person name="Jackson P.J."/>
        </authorList>
    </citation>
    <scope>NUCLEOTIDE SEQUENCE [GENOMIC DNA]</scope>
    <source>
        <strain>Pasteur</strain>
    </source>
</reference>
<reference key="2">
    <citation type="journal article" date="2002" name="Science">
        <title>Comparative genome sequencing for discovery of novel polymorphisms in Bacillus anthracis.</title>
        <authorList>
            <person name="Read T.D."/>
            <person name="Salzberg S.L."/>
            <person name="Pop M."/>
            <person name="Shumway M.F."/>
            <person name="Umayam L."/>
            <person name="Jiang L."/>
            <person name="Holtzapple E."/>
            <person name="Busch J.D."/>
            <person name="Smith K.L."/>
            <person name="Schupp J.M."/>
            <person name="Solomon D."/>
            <person name="Keim P."/>
            <person name="Fraser C.M."/>
        </authorList>
    </citation>
    <scope>NUCLEOTIDE SEQUENCE [GENOMIC DNA]</scope>
    <source>
        <strain>Ames / isolate Florida / A2012</strain>
    </source>
</reference>
<reference key="3">
    <citation type="journal article" date="2009" name="J. Bacteriol.">
        <title>The complete genome sequence of Bacillus anthracis Ames 'Ancestor'.</title>
        <authorList>
            <person name="Ravel J."/>
            <person name="Jiang L."/>
            <person name="Stanley S.T."/>
            <person name="Wilson M.R."/>
            <person name="Decker R.S."/>
            <person name="Read T.D."/>
            <person name="Worsham P."/>
            <person name="Keim P.S."/>
            <person name="Salzberg S.L."/>
            <person name="Fraser-Liggett C.M."/>
            <person name="Rasko D.A."/>
        </authorList>
    </citation>
    <scope>NUCLEOTIDE SEQUENCE [LARGE SCALE GENOMIC DNA]</scope>
    <source>
        <strain>Ames ancestor</strain>
    </source>
</reference>
<geneLocation type="plasmid">
    <name>pXO2</name>
</geneLocation>
<comment type="subcellular location">
    <subcellularLocation>
        <location evidence="2">Cell membrane</location>
        <topology evidence="2">Lipid-anchor</topology>
    </subcellularLocation>
</comment>
<comment type="sequence caution" evidence="2">
    <conflict type="erroneous initiation">
        <sequence resource="EMBL-CDS" id="AAF13637"/>
    </conflict>
</comment>